<protein>
    <recommendedName>
        <fullName>Uncharacterized GPI-anchored protein At3g06035</fullName>
    </recommendedName>
</protein>
<accession>Q84MC0</accession>
<accession>Q8H7F7</accession>
<accession>Q8L9J0</accession>
<gene>
    <name type="ordered locus">At3g06035</name>
    <name type="ORF">24F17.7</name>
</gene>
<name>UGPI4_ARATH</name>
<feature type="signal peptide" evidence="2">
    <location>
        <begin position="1"/>
        <end position="24"/>
    </location>
</feature>
<feature type="chain" id="PRO_0000036273" description="Uncharacterized GPI-anchored protein At3g06035">
    <location>
        <begin position="25"/>
        <end position="174"/>
    </location>
</feature>
<feature type="propeptide" id="PRO_0000036274" description="Removed in mature form" evidence="2">
    <location>
        <begin position="175"/>
        <end position="200"/>
    </location>
</feature>
<feature type="lipid moiety-binding region" description="GPI-anchor amidated serine" evidence="2">
    <location>
        <position position="174"/>
    </location>
</feature>
<feature type="glycosylation site" description="N-linked (GlcNAc...) asparagine" evidence="2">
    <location>
        <position position="44"/>
    </location>
</feature>
<feature type="glycosylation site" description="N-linked (GlcNAc...) asparagine" evidence="2">
    <location>
        <position position="72"/>
    </location>
</feature>
<feature type="glycosylation site" description="N-linked (GlcNAc...) asparagine" evidence="2">
    <location>
        <position position="99"/>
    </location>
</feature>
<feature type="glycosylation site" description="N-linked (GlcNAc...) asparagine" evidence="2">
    <location>
        <position position="124"/>
    </location>
</feature>
<feature type="glycosylation site" description="N-linked (GlcNAc...) asparagine" evidence="2">
    <location>
        <position position="135"/>
    </location>
</feature>
<feature type="sequence conflict" description="In Ref. 4; AAM65942." evidence="3" ref="4">
    <original>I</original>
    <variation>V</variation>
    <location>
        <position position="181"/>
    </location>
</feature>
<dbReference type="EMBL" id="AC068073">
    <property type="status" value="NOT_ANNOTATED_CDS"/>
    <property type="molecule type" value="Genomic_DNA"/>
</dbReference>
<dbReference type="EMBL" id="CP002686">
    <property type="protein sequence ID" value="AEE74333.1"/>
    <property type="molecule type" value="Genomic_DNA"/>
</dbReference>
<dbReference type="EMBL" id="BT006414">
    <property type="protein sequence ID" value="AAP21222.1"/>
    <property type="molecule type" value="mRNA"/>
</dbReference>
<dbReference type="EMBL" id="AY088405">
    <property type="protein sequence ID" value="AAM65942.1"/>
    <property type="molecule type" value="mRNA"/>
</dbReference>
<dbReference type="EMBL" id="AF083696">
    <property type="protein sequence ID" value="AAN60255.1"/>
    <property type="molecule type" value="mRNA"/>
</dbReference>
<dbReference type="RefSeq" id="NP_566267.1">
    <property type="nucleotide sequence ID" value="NM_111478.4"/>
</dbReference>
<dbReference type="SMR" id="Q84MC0"/>
<dbReference type="FunCoup" id="Q84MC0">
    <property type="interactions" value="478"/>
</dbReference>
<dbReference type="STRING" id="3702.Q84MC0"/>
<dbReference type="GlyGen" id="Q84MC0">
    <property type="glycosylation" value="5 sites"/>
</dbReference>
<dbReference type="PaxDb" id="3702-AT3G06035.1"/>
<dbReference type="ProteomicsDB" id="246394"/>
<dbReference type="EnsemblPlants" id="AT3G06035.1">
    <property type="protein sequence ID" value="AT3G06035.1"/>
    <property type="gene ID" value="AT3G06035"/>
</dbReference>
<dbReference type="GeneID" id="819776"/>
<dbReference type="Gramene" id="AT3G06035.1">
    <property type="protein sequence ID" value="AT3G06035.1"/>
    <property type="gene ID" value="AT3G06035"/>
</dbReference>
<dbReference type="KEGG" id="ath:AT3G06035"/>
<dbReference type="Araport" id="AT3G06035"/>
<dbReference type="TAIR" id="AT3G06035"/>
<dbReference type="eggNOG" id="ENOG502RYCU">
    <property type="taxonomic scope" value="Eukaryota"/>
</dbReference>
<dbReference type="HOGENOM" id="CLU_087436_1_0_1"/>
<dbReference type="InParanoid" id="Q84MC0"/>
<dbReference type="OMA" id="ASEDNWI"/>
<dbReference type="OrthoDB" id="753138at2759"/>
<dbReference type="PhylomeDB" id="Q84MC0"/>
<dbReference type="PRO" id="PR:Q84MC0"/>
<dbReference type="Proteomes" id="UP000006548">
    <property type="component" value="Chromosome 3"/>
</dbReference>
<dbReference type="ExpressionAtlas" id="Q84MC0">
    <property type="expression patterns" value="baseline and differential"/>
</dbReference>
<dbReference type="GO" id="GO:0005829">
    <property type="term" value="C:cytosol"/>
    <property type="evidence" value="ECO:0007005"/>
    <property type="project" value="TAIR"/>
</dbReference>
<dbReference type="GO" id="GO:0005886">
    <property type="term" value="C:plasma membrane"/>
    <property type="evidence" value="ECO:0007669"/>
    <property type="project" value="UniProtKB-SubCell"/>
</dbReference>
<dbReference type="GO" id="GO:0098552">
    <property type="term" value="C:side of membrane"/>
    <property type="evidence" value="ECO:0007669"/>
    <property type="project" value="UniProtKB-KW"/>
</dbReference>
<dbReference type="InterPro" id="IPR045285">
    <property type="entry name" value="At5g19230-like"/>
</dbReference>
<dbReference type="PANTHER" id="PTHR33976">
    <property type="entry name" value="OS07G0645000 PROTEIN"/>
    <property type="match status" value="1"/>
</dbReference>
<dbReference type="PANTHER" id="PTHR33976:SF8">
    <property type="entry name" value="OS07G0645000 PROTEIN"/>
    <property type="match status" value="1"/>
</dbReference>
<evidence type="ECO:0000250" key="1"/>
<evidence type="ECO:0000255" key="2"/>
<evidence type="ECO:0000305" key="3"/>
<organism>
    <name type="scientific">Arabidopsis thaliana</name>
    <name type="common">Mouse-ear cress</name>
    <dbReference type="NCBI Taxonomy" id="3702"/>
    <lineage>
        <taxon>Eukaryota</taxon>
        <taxon>Viridiplantae</taxon>
        <taxon>Streptophyta</taxon>
        <taxon>Embryophyta</taxon>
        <taxon>Tracheophyta</taxon>
        <taxon>Spermatophyta</taxon>
        <taxon>Magnoliopsida</taxon>
        <taxon>eudicotyledons</taxon>
        <taxon>Gunneridae</taxon>
        <taxon>Pentapetalae</taxon>
        <taxon>rosids</taxon>
        <taxon>malvids</taxon>
        <taxon>Brassicales</taxon>
        <taxon>Brassicaceae</taxon>
        <taxon>Camelineae</taxon>
        <taxon>Arabidopsis</taxon>
    </lineage>
</organism>
<keyword id="KW-1003">Cell membrane</keyword>
<keyword id="KW-0325">Glycoprotein</keyword>
<keyword id="KW-0336">GPI-anchor</keyword>
<keyword id="KW-0449">Lipoprotein</keyword>
<keyword id="KW-0472">Membrane</keyword>
<keyword id="KW-1185">Reference proteome</keyword>
<keyword id="KW-0732">Signal</keyword>
<proteinExistence type="evidence at transcript level"/>
<reference key="1">
    <citation type="journal article" date="2000" name="Nature">
        <title>Sequence and analysis of chromosome 3 of the plant Arabidopsis thaliana.</title>
        <authorList>
            <person name="Salanoubat M."/>
            <person name="Lemcke K."/>
            <person name="Rieger M."/>
            <person name="Ansorge W."/>
            <person name="Unseld M."/>
            <person name="Fartmann B."/>
            <person name="Valle G."/>
            <person name="Bloecker H."/>
            <person name="Perez-Alonso M."/>
            <person name="Obermaier B."/>
            <person name="Delseny M."/>
            <person name="Boutry M."/>
            <person name="Grivell L.A."/>
            <person name="Mache R."/>
            <person name="Puigdomenech P."/>
            <person name="De Simone V."/>
            <person name="Choisne N."/>
            <person name="Artiguenave F."/>
            <person name="Robert C."/>
            <person name="Brottier P."/>
            <person name="Wincker P."/>
            <person name="Cattolico L."/>
            <person name="Weissenbach J."/>
            <person name="Saurin W."/>
            <person name="Quetier F."/>
            <person name="Schaefer M."/>
            <person name="Mueller-Auer S."/>
            <person name="Gabel C."/>
            <person name="Fuchs M."/>
            <person name="Benes V."/>
            <person name="Wurmbach E."/>
            <person name="Drzonek H."/>
            <person name="Erfle H."/>
            <person name="Jordan N."/>
            <person name="Bangert S."/>
            <person name="Wiedelmann R."/>
            <person name="Kranz H."/>
            <person name="Voss H."/>
            <person name="Holland R."/>
            <person name="Brandt P."/>
            <person name="Nyakatura G."/>
            <person name="Vezzi A."/>
            <person name="D'Angelo M."/>
            <person name="Pallavicini A."/>
            <person name="Toppo S."/>
            <person name="Simionati B."/>
            <person name="Conrad A."/>
            <person name="Hornischer K."/>
            <person name="Kauer G."/>
            <person name="Loehnert T.-H."/>
            <person name="Nordsiek G."/>
            <person name="Reichelt J."/>
            <person name="Scharfe M."/>
            <person name="Schoen O."/>
            <person name="Bargues M."/>
            <person name="Terol J."/>
            <person name="Climent J."/>
            <person name="Navarro P."/>
            <person name="Collado C."/>
            <person name="Perez-Perez A."/>
            <person name="Ottenwaelder B."/>
            <person name="Duchemin D."/>
            <person name="Cooke R."/>
            <person name="Laudie M."/>
            <person name="Berger-Llauro C."/>
            <person name="Purnelle B."/>
            <person name="Masuy D."/>
            <person name="de Haan M."/>
            <person name="Maarse A.C."/>
            <person name="Alcaraz J.-P."/>
            <person name="Cottet A."/>
            <person name="Casacuberta E."/>
            <person name="Monfort A."/>
            <person name="Argiriou A."/>
            <person name="Flores M."/>
            <person name="Liguori R."/>
            <person name="Vitale D."/>
            <person name="Mannhaupt G."/>
            <person name="Haase D."/>
            <person name="Schoof H."/>
            <person name="Rudd S."/>
            <person name="Zaccaria P."/>
            <person name="Mewes H.-W."/>
            <person name="Mayer K.F.X."/>
            <person name="Kaul S."/>
            <person name="Town C.D."/>
            <person name="Koo H.L."/>
            <person name="Tallon L.J."/>
            <person name="Jenkins J."/>
            <person name="Rooney T."/>
            <person name="Rizzo M."/>
            <person name="Walts A."/>
            <person name="Utterback T."/>
            <person name="Fujii C.Y."/>
            <person name="Shea T.P."/>
            <person name="Creasy T.H."/>
            <person name="Haas B."/>
            <person name="Maiti R."/>
            <person name="Wu D."/>
            <person name="Peterson J."/>
            <person name="Van Aken S."/>
            <person name="Pai G."/>
            <person name="Militscher J."/>
            <person name="Sellers P."/>
            <person name="Gill J.E."/>
            <person name="Feldblyum T.V."/>
            <person name="Preuss D."/>
            <person name="Lin X."/>
            <person name="Nierman W.C."/>
            <person name="Salzberg S.L."/>
            <person name="White O."/>
            <person name="Venter J.C."/>
            <person name="Fraser C.M."/>
            <person name="Kaneko T."/>
            <person name="Nakamura Y."/>
            <person name="Sato S."/>
            <person name="Kato T."/>
            <person name="Asamizu E."/>
            <person name="Sasamoto S."/>
            <person name="Kimura T."/>
            <person name="Idesawa K."/>
            <person name="Kawashima K."/>
            <person name="Kishida Y."/>
            <person name="Kiyokawa C."/>
            <person name="Kohara M."/>
            <person name="Matsumoto M."/>
            <person name="Matsuno A."/>
            <person name="Muraki A."/>
            <person name="Nakayama S."/>
            <person name="Nakazaki N."/>
            <person name="Shinpo S."/>
            <person name="Takeuchi C."/>
            <person name="Wada T."/>
            <person name="Watanabe A."/>
            <person name="Yamada M."/>
            <person name="Yasuda M."/>
            <person name="Tabata S."/>
        </authorList>
    </citation>
    <scope>NUCLEOTIDE SEQUENCE [LARGE SCALE GENOMIC DNA]</scope>
    <source>
        <strain>cv. Columbia</strain>
    </source>
</reference>
<reference key="2">
    <citation type="journal article" date="2017" name="Plant J.">
        <title>Araport11: a complete reannotation of the Arabidopsis thaliana reference genome.</title>
        <authorList>
            <person name="Cheng C.Y."/>
            <person name="Krishnakumar V."/>
            <person name="Chan A.P."/>
            <person name="Thibaud-Nissen F."/>
            <person name="Schobel S."/>
            <person name="Town C.D."/>
        </authorList>
    </citation>
    <scope>GENOME REANNOTATION</scope>
    <source>
        <strain>cv. Columbia</strain>
    </source>
</reference>
<reference key="3">
    <citation type="journal article" date="2003" name="Science">
        <title>Empirical analysis of transcriptional activity in the Arabidopsis genome.</title>
        <authorList>
            <person name="Yamada K."/>
            <person name="Lim J."/>
            <person name="Dale J.M."/>
            <person name="Chen H."/>
            <person name="Shinn P."/>
            <person name="Palm C.J."/>
            <person name="Southwick A.M."/>
            <person name="Wu H.C."/>
            <person name="Kim C.J."/>
            <person name="Nguyen M."/>
            <person name="Pham P.K."/>
            <person name="Cheuk R.F."/>
            <person name="Karlin-Newmann G."/>
            <person name="Liu S.X."/>
            <person name="Lam B."/>
            <person name="Sakano H."/>
            <person name="Wu T."/>
            <person name="Yu G."/>
            <person name="Miranda M."/>
            <person name="Quach H.L."/>
            <person name="Tripp M."/>
            <person name="Chang C.H."/>
            <person name="Lee J.M."/>
            <person name="Toriumi M.J."/>
            <person name="Chan M.M."/>
            <person name="Tang C.C."/>
            <person name="Onodera C.S."/>
            <person name="Deng J.M."/>
            <person name="Akiyama K."/>
            <person name="Ansari Y."/>
            <person name="Arakawa T."/>
            <person name="Banh J."/>
            <person name="Banno F."/>
            <person name="Bowser L."/>
            <person name="Brooks S.Y."/>
            <person name="Carninci P."/>
            <person name="Chao Q."/>
            <person name="Choy N."/>
            <person name="Enju A."/>
            <person name="Goldsmith A.D."/>
            <person name="Gurjal M."/>
            <person name="Hansen N.F."/>
            <person name="Hayashizaki Y."/>
            <person name="Johnson-Hopson C."/>
            <person name="Hsuan V.W."/>
            <person name="Iida K."/>
            <person name="Karnes M."/>
            <person name="Khan S."/>
            <person name="Koesema E."/>
            <person name="Ishida J."/>
            <person name="Jiang P.X."/>
            <person name="Jones T."/>
            <person name="Kawai J."/>
            <person name="Kamiya A."/>
            <person name="Meyers C."/>
            <person name="Nakajima M."/>
            <person name="Narusaka M."/>
            <person name="Seki M."/>
            <person name="Sakurai T."/>
            <person name="Satou M."/>
            <person name="Tamse R."/>
            <person name="Vaysberg M."/>
            <person name="Wallender E.K."/>
            <person name="Wong C."/>
            <person name="Yamamura Y."/>
            <person name="Yuan S."/>
            <person name="Shinozaki K."/>
            <person name="Davis R.W."/>
            <person name="Theologis A."/>
            <person name="Ecker J.R."/>
        </authorList>
    </citation>
    <scope>NUCLEOTIDE SEQUENCE [LARGE SCALE MRNA]</scope>
    <source>
        <strain>cv. Columbia</strain>
    </source>
</reference>
<reference key="4">
    <citation type="submission" date="2002-03" db="EMBL/GenBank/DDBJ databases">
        <title>Full-length cDNA from Arabidopsis thaliana.</title>
        <authorList>
            <person name="Brover V.V."/>
            <person name="Troukhan M.E."/>
            <person name="Alexandrov N.A."/>
            <person name="Lu Y.-P."/>
            <person name="Flavell R.B."/>
            <person name="Feldmann K.A."/>
        </authorList>
    </citation>
    <scope>NUCLEOTIDE SEQUENCE [LARGE SCALE MRNA]</scope>
</reference>
<reference key="5">
    <citation type="submission" date="1998-08" db="EMBL/GenBank/DDBJ databases">
        <title>Signal peptide selection derived cDNAs from Arabidopsis thaliana leaves and guard cells.</title>
        <authorList>
            <person name="Stracke R."/>
            <person name="Palme K."/>
        </authorList>
    </citation>
    <scope>NUCLEOTIDE SEQUENCE [LARGE SCALE MRNA] OF 1-106</scope>
</reference>
<sequence length="200" mass="22053">MAIDKLPLLLFLSILLCLNRPVLSDTDEEDILLTGINSYRTTQNLTILSKNENAECLADEIADQFKNKPCTNDTGSATVPGTEPQFANYPQILAKCHLNVSDTRDGSIMPACVPRLESNLVLTNFTKSQYSMSLNDSKFTGIGIGKEDDWIVVVLTTNTPEGSYSTATPTKQESNGFTFGIGLVSYLVIFMYSSFCFFLF</sequence>
<comment type="subcellular location">
    <subcellularLocation>
        <location evidence="1">Cell membrane</location>
        <topology evidence="1">Lipid-anchor</topology>
        <topology evidence="1">GPI-anchor</topology>
    </subcellularLocation>
</comment>
<comment type="similarity">
    <text evidence="3">Belongs to the UPF0277 family.</text>
</comment>